<feature type="chain" id="PRO_0000190352" description="Recombination protein RecR">
    <location>
        <begin position="1"/>
        <end position="191"/>
    </location>
</feature>
<feature type="domain" description="Toprim" evidence="1">
    <location>
        <begin position="78"/>
        <end position="170"/>
    </location>
</feature>
<feature type="zinc finger region" description="C4-type" evidence="1">
    <location>
        <begin position="56"/>
        <end position="71"/>
    </location>
</feature>
<keyword id="KW-0227">DNA damage</keyword>
<keyword id="KW-0233">DNA recombination</keyword>
<keyword id="KW-0234">DNA repair</keyword>
<keyword id="KW-0479">Metal-binding</keyword>
<keyword id="KW-1185">Reference proteome</keyword>
<keyword id="KW-0862">Zinc</keyword>
<keyword id="KW-0863">Zinc-finger</keyword>
<dbReference type="EMBL" id="AL445563">
    <property type="protein sequence ID" value="CAC13224.1"/>
    <property type="molecule type" value="Genomic_DNA"/>
</dbReference>
<dbReference type="PIR" id="C90518">
    <property type="entry name" value="C90518"/>
</dbReference>
<dbReference type="RefSeq" id="WP_010924855.1">
    <property type="nucleotide sequence ID" value="NC_002771.1"/>
</dbReference>
<dbReference type="SMR" id="Q98RF8"/>
<dbReference type="STRING" id="272635.gene:17576630"/>
<dbReference type="KEGG" id="mpu:MYPU_0510"/>
<dbReference type="eggNOG" id="COG0353">
    <property type="taxonomic scope" value="Bacteria"/>
</dbReference>
<dbReference type="HOGENOM" id="CLU_060739_1_0_14"/>
<dbReference type="BioCyc" id="MPUL272635:G1GT6-51-MONOMER"/>
<dbReference type="Proteomes" id="UP000000528">
    <property type="component" value="Chromosome"/>
</dbReference>
<dbReference type="GO" id="GO:0003677">
    <property type="term" value="F:DNA binding"/>
    <property type="evidence" value="ECO:0007669"/>
    <property type="project" value="UniProtKB-UniRule"/>
</dbReference>
<dbReference type="GO" id="GO:0008270">
    <property type="term" value="F:zinc ion binding"/>
    <property type="evidence" value="ECO:0007669"/>
    <property type="project" value="UniProtKB-KW"/>
</dbReference>
<dbReference type="GO" id="GO:0006310">
    <property type="term" value="P:DNA recombination"/>
    <property type="evidence" value="ECO:0007669"/>
    <property type="project" value="UniProtKB-UniRule"/>
</dbReference>
<dbReference type="GO" id="GO:0006281">
    <property type="term" value="P:DNA repair"/>
    <property type="evidence" value="ECO:0007669"/>
    <property type="project" value="UniProtKB-UniRule"/>
</dbReference>
<dbReference type="CDD" id="cd01025">
    <property type="entry name" value="TOPRIM_recR"/>
    <property type="match status" value="1"/>
</dbReference>
<dbReference type="Gene3D" id="3.40.1360.10">
    <property type="match status" value="1"/>
</dbReference>
<dbReference type="Gene3D" id="1.10.8.420">
    <property type="entry name" value="RecR Domain 1"/>
    <property type="match status" value="1"/>
</dbReference>
<dbReference type="HAMAP" id="MF_00017">
    <property type="entry name" value="RecR"/>
    <property type="match status" value="1"/>
</dbReference>
<dbReference type="InterPro" id="IPR000093">
    <property type="entry name" value="DNA_Rcmb_RecR"/>
</dbReference>
<dbReference type="InterPro" id="IPR023627">
    <property type="entry name" value="Rcmb_RecR"/>
</dbReference>
<dbReference type="InterPro" id="IPR006171">
    <property type="entry name" value="TOPRIM_dom"/>
</dbReference>
<dbReference type="InterPro" id="IPR034137">
    <property type="entry name" value="TOPRIM_RecR"/>
</dbReference>
<dbReference type="NCBIfam" id="TIGR00615">
    <property type="entry name" value="recR"/>
    <property type="match status" value="1"/>
</dbReference>
<dbReference type="PANTHER" id="PTHR30446">
    <property type="entry name" value="RECOMBINATION PROTEIN RECR"/>
    <property type="match status" value="1"/>
</dbReference>
<dbReference type="PANTHER" id="PTHR30446:SF0">
    <property type="entry name" value="RECOMBINATION PROTEIN RECR"/>
    <property type="match status" value="1"/>
</dbReference>
<dbReference type="Pfam" id="PF21175">
    <property type="entry name" value="RecR_C"/>
    <property type="match status" value="1"/>
</dbReference>
<dbReference type="Pfam" id="PF21176">
    <property type="entry name" value="RecR_HhH"/>
    <property type="match status" value="1"/>
</dbReference>
<dbReference type="Pfam" id="PF13662">
    <property type="entry name" value="Toprim_4"/>
    <property type="match status" value="1"/>
</dbReference>
<dbReference type="SUPFAM" id="SSF111304">
    <property type="entry name" value="Recombination protein RecR"/>
    <property type="match status" value="1"/>
</dbReference>
<dbReference type="PROSITE" id="PS50880">
    <property type="entry name" value="TOPRIM"/>
    <property type="match status" value="1"/>
</dbReference>
<protein>
    <recommendedName>
        <fullName evidence="1">Recombination protein RecR</fullName>
    </recommendedName>
</protein>
<gene>
    <name evidence="1" type="primary">recR</name>
    <name type="ordered locus">MYPU_0510</name>
</gene>
<comment type="function">
    <text evidence="1">May play a role in DNA repair. It seems to be involved in an RecBC-independent recombinational process of DNA repair. It may act with RecF and RecO.</text>
</comment>
<comment type="similarity">
    <text evidence="1">Belongs to the RecR family.</text>
</comment>
<reference key="1">
    <citation type="journal article" date="2001" name="Nucleic Acids Res.">
        <title>The complete genome sequence of the murine respiratory pathogen Mycoplasma pulmonis.</title>
        <authorList>
            <person name="Chambaud I."/>
            <person name="Heilig R."/>
            <person name="Ferris S."/>
            <person name="Barbe V."/>
            <person name="Samson D."/>
            <person name="Galisson F."/>
            <person name="Moszer I."/>
            <person name="Dybvig K."/>
            <person name="Wroblewski H."/>
            <person name="Viari A."/>
            <person name="Rocha E.P.C."/>
            <person name="Blanchard A."/>
        </authorList>
    </citation>
    <scope>NUCLEOTIDE SEQUENCE [LARGE SCALE GENOMIC DNA]</scope>
    <source>
        <strain>UAB CTIP</strain>
    </source>
</reference>
<sequence length="191" mass="22142">MKNQYIDNLILNLKKLPGVGTKQAEKISFFLLKQNENEVEQIINSIVDLKKNIKECQNCNFLQSNNICHFCMDKSRNKQLMIFETTSDALKFEKLGIYRGKYFIIKNLIENVKNANEPKWKDKLLHYASNFEEIIIALNPTIEGQITSNYIKVILEEVALKVTKLAQGLPINSQIDYIDPITLNLSFENRK</sequence>
<proteinExistence type="inferred from homology"/>
<accession>Q98RF8</accession>
<name>RECR_MYCPU</name>
<evidence type="ECO:0000255" key="1">
    <source>
        <dbReference type="HAMAP-Rule" id="MF_00017"/>
    </source>
</evidence>
<organism>
    <name type="scientific">Mycoplasmopsis pulmonis (strain UAB CTIP)</name>
    <name type="common">Mycoplasma pulmonis</name>
    <dbReference type="NCBI Taxonomy" id="272635"/>
    <lineage>
        <taxon>Bacteria</taxon>
        <taxon>Bacillati</taxon>
        <taxon>Mycoplasmatota</taxon>
        <taxon>Mycoplasmoidales</taxon>
        <taxon>Metamycoplasmataceae</taxon>
        <taxon>Mycoplasmopsis</taxon>
    </lineage>
</organism>